<evidence type="ECO:0000250" key="1"/>
<evidence type="ECO:0000305" key="2"/>
<dbReference type="EMBL" id="BA000017">
    <property type="protein sequence ID" value="BAB58437.1"/>
    <property type="molecule type" value="Genomic_DNA"/>
</dbReference>
<dbReference type="RefSeq" id="WP_000503822.1">
    <property type="nucleotide sequence ID" value="NC_002758.2"/>
</dbReference>
<dbReference type="SMR" id="P65406"/>
<dbReference type="KEGG" id="sav:SAV2275"/>
<dbReference type="HOGENOM" id="CLU_077358_2_3_9"/>
<dbReference type="PhylomeDB" id="P65406"/>
<dbReference type="UniPathway" id="UPA00344"/>
<dbReference type="Proteomes" id="UP000002481">
    <property type="component" value="Chromosome"/>
</dbReference>
<dbReference type="GO" id="GO:0005829">
    <property type="term" value="C:cytosol"/>
    <property type="evidence" value="ECO:0007669"/>
    <property type="project" value="TreeGrafter"/>
</dbReference>
<dbReference type="GO" id="GO:0006777">
    <property type="term" value="P:Mo-molybdopterin cofactor biosynthetic process"/>
    <property type="evidence" value="ECO:0007669"/>
    <property type="project" value="UniProtKB-KW"/>
</dbReference>
<dbReference type="CDD" id="cd00886">
    <property type="entry name" value="MogA_MoaB"/>
    <property type="match status" value="1"/>
</dbReference>
<dbReference type="FunFam" id="3.40.980.10:FF:000006">
    <property type="entry name" value="Molybdenum cofactor biosynthesis protein B"/>
    <property type="match status" value="1"/>
</dbReference>
<dbReference type="Gene3D" id="3.40.980.10">
    <property type="entry name" value="MoaB/Mog-like domain"/>
    <property type="match status" value="1"/>
</dbReference>
<dbReference type="InterPro" id="IPR012245">
    <property type="entry name" value="MoaB"/>
</dbReference>
<dbReference type="InterPro" id="IPR036425">
    <property type="entry name" value="MoaB/Mog-like_dom_sf"/>
</dbReference>
<dbReference type="InterPro" id="IPR001453">
    <property type="entry name" value="MoaB/Mog_dom"/>
</dbReference>
<dbReference type="InterPro" id="IPR008284">
    <property type="entry name" value="MoCF_biosynth_CS"/>
</dbReference>
<dbReference type="NCBIfam" id="TIGR00177">
    <property type="entry name" value="molyb_syn"/>
    <property type="match status" value="1"/>
</dbReference>
<dbReference type="PANTHER" id="PTHR43232">
    <property type="entry name" value="MOLYBDENUM COFACTOR BIOSYNTHESIS PROTEIN B"/>
    <property type="match status" value="1"/>
</dbReference>
<dbReference type="PANTHER" id="PTHR43232:SF2">
    <property type="entry name" value="MOLYBDENUM COFACTOR BIOSYNTHESIS PROTEIN B"/>
    <property type="match status" value="1"/>
</dbReference>
<dbReference type="Pfam" id="PF00994">
    <property type="entry name" value="MoCF_biosynth"/>
    <property type="match status" value="1"/>
</dbReference>
<dbReference type="PIRSF" id="PIRSF006443">
    <property type="entry name" value="MoaB"/>
    <property type="match status" value="1"/>
</dbReference>
<dbReference type="SMART" id="SM00852">
    <property type="entry name" value="MoCF_biosynth"/>
    <property type="match status" value="1"/>
</dbReference>
<dbReference type="SUPFAM" id="SSF53218">
    <property type="entry name" value="Molybdenum cofactor biosynthesis proteins"/>
    <property type="match status" value="1"/>
</dbReference>
<dbReference type="PROSITE" id="PS01078">
    <property type="entry name" value="MOCF_BIOSYNTHESIS_1"/>
    <property type="match status" value="1"/>
</dbReference>
<reference key="1">
    <citation type="journal article" date="2001" name="Lancet">
        <title>Whole genome sequencing of meticillin-resistant Staphylococcus aureus.</title>
        <authorList>
            <person name="Kuroda M."/>
            <person name="Ohta T."/>
            <person name="Uchiyama I."/>
            <person name="Baba T."/>
            <person name="Yuzawa H."/>
            <person name="Kobayashi I."/>
            <person name="Cui L."/>
            <person name="Oguchi A."/>
            <person name="Aoki K."/>
            <person name="Nagai Y."/>
            <person name="Lian J.-Q."/>
            <person name="Ito T."/>
            <person name="Kanamori M."/>
            <person name="Matsumaru H."/>
            <person name="Maruyama A."/>
            <person name="Murakami H."/>
            <person name="Hosoyama A."/>
            <person name="Mizutani-Ui Y."/>
            <person name="Takahashi N.K."/>
            <person name="Sawano T."/>
            <person name="Inoue R."/>
            <person name="Kaito C."/>
            <person name="Sekimizu K."/>
            <person name="Hirakawa H."/>
            <person name="Kuhara S."/>
            <person name="Goto S."/>
            <person name="Yabuzaki J."/>
            <person name="Kanehisa M."/>
            <person name="Yamashita A."/>
            <person name="Oshima K."/>
            <person name="Furuya K."/>
            <person name="Yoshino C."/>
            <person name="Shiba T."/>
            <person name="Hattori M."/>
            <person name="Ogasawara N."/>
            <person name="Hayashi H."/>
            <person name="Hiramatsu K."/>
        </authorList>
    </citation>
    <scope>NUCLEOTIDE SEQUENCE [LARGE SCALE GENOMIC DNA]</scope>
    <source>
        <strain>Mu50 / ATCC 700699</strain>
    </source>
</reference>
<sequence length="168" mass="18484">MGEHQNVKLNRTVKAAVLTVSDTRDFVTDKGGQCVRQLLQADDVEVSDAHYTIVKDEKVAITTQVKKWLEEDIDVIITTGGTGIAQRDVTIEAVKPLLTKEIEGFGELFRYLSYVEDVGTRALLSRAVAGTVNNKLIFSIPGSTGAVKLALEKLIKPELNHLIHELTK</sequence>
<keyword id="KW-0501">Molybdenum cofactor biosynthesis</keyword>
<accession>P65406</accession>
<accession>Q99RZ7</accession>
<name>MOAB_STAAM</name>
<organism>
    <name type="scientific">Staphylococcus aureus (strain Mu50 / ATCC 700699)</name>
    <dbReference type="NCBI Taxonomy" id="158878"/>
    <lineage>
        <taxon>Bacteria</taxon>
        <taxon>Bacillati</taxon>
        <taxon>Bacillota</taxon>
        <taxon>Bacilli</taxon>
        <taxon>Bacillales</taxon>
        <taxon>Staphylococcaceae</taxon>
        <taxon>Staphylococcus</taxon>
    </lineage>
</organism>
<comment type="function">
    <text evidence="1">May be involved in the biosynthesis of molybdopterin.</text>
</comment>
<comment type="pathway">
    <text>Cofactor biosynthesis; molybdopterin biosynthesis.</text>
</comment>
<comment type="similarity">
    <text evidence="2">Belongs to the MoaB/Mog family.</text>
</comment>
<gene>
    <name type="primary">moaB</name>
    <name type="ordered locus">SAV2275</name>
</gene>
<proteinExistence type="inferred from homology"/>
<protein>
    <recommendedName>
        <fullName>Molybdenum cofactor biosynthesis protein B</fullName>
    </recommendedName>
</protein>
<feature type="chain" id="PRO_0000170973" description="Molybdenum cofactor biosynthesis protein B">
    <location>
        <begin position="1"/>
        <end position="168"/>
    </location>
</feature>